<name>FRDC_ECOUT</name>
<protein>
    <recommendedName>
        <fullName evidence="1">Fumarate reductase subunit C</fullName>
    </recommendedName>
    <alternativeName>
        <fullName evidence="1">Fumarate reductase 15 kDa hydrophobic protein</fullName>
    </alternativeName>
    <alternativeName>
        <fullName evidence="1">Quinol-fumarate reductase subunit C</fullName>
        <shortName evidence="1">QFR subunit C</shortName>
    </alternativeName>
</protein>
<gene>
    <name evidence="1" type="primary">frdC</name>
    <name type="ordered locus">UTI89_C4752</name>
</gene>
<reference key="1">
    <citation type="journal article" date="2006" name="Proc. Natl. Acad. Sci. U.S.A.">
        <title>Identification of genes subject to positive selection in uropathogenic strains of Escherichia coli: a comparative genomics approach.</title>
        <authorList>
            <person name="Chen S.L."/>
            <person name="Hung C.-S."/>
            <person name="Xu J."/>
            <person name="Reigstad C.S."/>
            <person name="Magrini V."/>
            <person name="Sabo A."/>
            <person name="Blasiar D."/>
            <person name="Bieri T."/>
            <person name="Meyer R.R."/>
            <person name="Ozersky P."/>
            <person name="Armstrong J.R."/>
            <person name="Fulton R.S."/>
            <person name="Latreille J.P."/>
            <person name="Spieth J."/>
            <person name="Hooton T.M."/>
            <person name="Mardis E.R."/>
            <person name="Hultgren S.J."/>
            <person name="Gordon J.I."/>
        </authorList>
    </citation>
    <scope>NUCLEOTIDE SEQUENCE [LARGE SCALE GENOMIC DNA]</scope>
    <source>
        <strain>UTI89 / UPEC</strain>
    </source>
</reference>
<comment type="function">
    <text evidence="1">Two distinct, membrane-bound, FAD-containing enzymes are responsible for the catalysis of fumarate and succinate interconversion; fumarate reductase is used in anaerobic growth, and succinate dehydrogenase is used in aerobic growth. Anchors the catalytic components of the fumarate reductase complex to the cell inner membrane, binds quinones.</text>
</comment>
<comment type="subunit">
    <text evidence="1">Part of an enzyme complex containing four subunits: a flavoprotein (FrdA), an iron-sulfur protein (FrdB), and two hydrophobic anchor proteins (FrdC and FrdD).</text>
</comment>
<comment type="subcellular location">
    <subcellularLocation>
        <location evidence="1">Cell inner membrane</location>
        <topology evidence="1">Multi-pass membrane protein</topology>
    </subcellularLocation>
</comment>
<comment type="similarity">
    <text evidence="1">Belongs to the FrdC family.</text>
</comment>
<sequence length="131" mass="15015">MTTKRKPYVRPMTSTWWKKLPFYRFYMLREGTAVPAVWFSIELIFGLFALKNGPEAWAGFVDFLQNPVIVIINLITLAAALLHTKTWFELAPKAANIIVKDEKMGPEPIIKSLWAVTVVATIVILFVALYW</sequence>
<dbReference type="EMBL" id="CP000243">
    <property type="protein sequence ID" value="ABE10159.1"/>
    <property type="molecule type" value="Genomic_DNA"/>
</dbReference>
<dbReference type="RefSeq" id="WP_000208757.1">
    <property type="nucleotide sequence ID" value="NZ_CP064825.1"/>
</dbReference>
<dbReference type="SMR" id="Q1R3A5"/>
<dbReference type="GeneID" id="93777670"/>
<dbReference type="KEGG" id="eci:UTI89_C4752"/>
<dbReference type="HOGENOM" id="CLU_156492_0_0_6"/>
<dbReference type="Proteomes" id="UP000001952">
    <property type="component" value="Chromosome"/>
</dbReference>
<dbReference type="GO" id="GO:0045283">
    <property type="term" value="C:fumarate reductase complex"/>
    <property type="evidence" value="ECO:0007669"/>
    <property type="project" value="UniProtKB-UniRule"/>
</dbReference>
<dbReference type="GO" id="GO:0005886">
    <property type="term" value="C:plasma membrane"/>
    <property type="evidence" value="ECO:0007669"/>
    <property type="project" value="UniProtKB-SubCell"/>
</dbReference>
<dbReference type="GO" id="GO:0000104">
    <property type="term" value="F:succinate dehydrogenase activity"/>
    <property type="evidence" value="ECO:0007669"/>
    <property type="project" value="UniProtKB-UniRule"/>
</dbReference>
<dbReference type="CDD" id="cd00546">
    <property type="entry name" value="QFR_TypeD_subunitC"/>
    <property type="match status" value="1"/>
</dbReference>
<dbReference type="FunFam" id="1.20.1300.10:FF:000003">
    <property type="entry name" value="Fumarate reductase subunit C"/>
    <property type="match status" value="1"/>
</dbReference>
<dbReference type="Gene3D" id="1.20.1300.10">
    <property type="entry name" value="Fumarate reductase/succinate dehydrogenase, transmembrane subunit"/>
    <property type="match status" value="1"/>
</dbReference>
<dbReference type="HAMAP" id="MF_00708">
    <property type="entry name" value="Fumarate_red_C"/>
    <property type="match status" value="1"/>
</dbReference>
<dbReference type="InterPro" id="IPR003510">
    <property type="entry name" value="Fumarate_red_C"/>
</dbReference>
<dbReference type="InterPro" id="IPR034804">
    <property type="entry name" value="SQR/QFR_C/D"/>
</dbReference>
<dbReference type="NCBIfam" id="NF003445">
    <property type="entry name" value="PRK04987.1"/>
    <property type="match status" value="1"/>
</dbReference>
<dbReference type="Pfam" id="PF02300">
    <property type="entry name" value="Fumarate_red_C"/>
    <property type="match status" value="1"/>
</dbReference>
<dbReference type="PIRSF" id="PIRSF000180">
    <property type="entry name" value="FrdC"/>
    <property type="match status" value="1"/>
</dbReference>
<dbReference type="SUPFAM" id="SSF81343">
    <property type="entry name" value="Fumarate reductase respiratory complex transmembrane subunits"/>
    <property type="match status" value="1"/>
</dbReference>
<proteinExistence type="inferred from homology"/>
<evidence type="ECO:0000255" key="1">
    <source>
        <dbReference type="HAMAP-Rule" id="MF_00708"/>
    </source>
</evidence>
<accession>Q1R3A5</accession>
<feature type="chain" id="PRO_1000045525" description="Fumarate reductase subunit C">
    <location>
        <begin position="1"/>
        <end position="131"/>
    </location>
</feature>
<feature type="transmembrane region" description="Helical" evidence="1">
    <location>
        <begin position="30"/>
        <end position="50"/>
    </location>
</feature>
<feature type="transmembrane region" description="Helical" evidence="1">
    <location>
        <begin position="63"/>
        <end position="83"/>
    </location>
</feature>
<feature type="transmembrane region" description="Helical" evidence="1">
    <location>
        <begin position="109"/>
        <end position="129"/>
    </location>
</feature>
<keyword id="KW-0997">Cell inner membrane</keyword>
<keyword id="KW-1003">Cell membrane</keyword>
<keyword id="KW-0472">Membrane</keyword>
<keyword id="KW-0812">Transmembrane</keyword>
<keyword id="KW-1133">Transmembrane helix</keyword>
<organism>
    <name type="scientific">Escherichia coli (strain UTI89 / UPEC)</name>
    <dbReference type="NCBI Taxonomy" id="364106"/>
    <lineage>
        <taxon>Bacteria</taxon>
        <taxon>Pseudomonadati</taxon>
        <taxon>Pseudomonadota</taxon>
        <taxon>Gammaproteobacteria</taxon>
        <taxon>Enterobacterales</taxon>
        <taxon>Enterobacteriaceae</taxon>
        <taxon>Escherichia</taxon>
    </lineage>
</organism>